<proteinExistence type="predicted"/>
<comment type="subcellular location">
    <subcellularLocation>
        <location evidence="3">Membrane</location>
        <topology evidence="3">Single-pass membrane protein</topology>
    </subcellularLocation>
</comment>
<sequence>MGKGELELAGFILSEAFDEKAEKEKVEKEKALKEKTEKEKAEKEKAEKEKVEKEKAEKEKAAKEKAAKEKAEREKSKSAVSPATTNQNSNKGNVEKGVAIGVLAGGAVTGVAVGGAYLADKYIASKAAGAAVNVIELTPIPNAANTANNAAAVSQGSHRWQPLPYYLFNI</sequence>
<dbReference type="EMBL" id="AAFI02000199">
    <property type="protein sequence ID" value="EAL60866.1"/>
    <property type="molecule type" value="Genomic_DNA"/>
</dbReference>
<dbReference type="RefSeq" id="XP_629273.1">
    <property type="nucleotide sequence ID" value="XM_629271.1"/>
</dbReference>
<dbReference type="SMR" id="Q54CE6"/>
<dbReference type="PaxDb" id="44689-DDB0191725"/>
<dbReference type="EnsemblProtists" id="EAL60866">
    <property type="protein sequence ID" value="EAL60866"/>
    <property type="gene ID" value="DDB_G0293028"/>
</dbReference>
<dbReference type="GeneID" id="8628994"/>
<dbReference type="KEGG" id="ddi:DDB_G0293028"/>
<dbReference type="dictyBase" id="DDB_G0293028"/>
<dbReference type="VEuPathDB" id="AmoebaDB:DDB_G0293028"/>
<dbReference type="HOGENOM" id="CLU_1573541_0_0_1"/>
<dbReference type="InParanoid" id="Q54CE6"/>
<dbReference type="PRO" id="PR:Q54CE6"/>
<dbReference type="Proteomes" id="UP000002195">
    <property type="component" value="Chromosome 6"/>
</dbReference>
<dbReference type="GO" id="GO:0016020">
    <property type="term" value="C:membrane"/>
    <property type="evidence" value="ECO:0007669"/>
    <property type="project" value="UniProtKB-SubCell"/>
</dbReference>
<reference key="1">
    <citation type="journal article" date="2005" name="Nature">
        <title>The genome of the social amoeba Dictyostelium discoideum.</title>
        <authorList>
            <person name="Eichinger L."/>
            <person name="Pachebat J.A."/>
            <person name="Gloeckner G."/>
            <person name="Rajandream M.A."/>
            <person name="Sucgang R."/>
            <person name="Berriman M."/>
            <person name="Song J."/>
            <person name="Olsen R."/>
            <person name="Szafranski K."/>
            <person name="Xu Q."/>
            <person name="Tunggal B."/>
            <person name="Kummerfeld S."/>
            <person name="Madera M."/>
            <person name="Konfortov B.A."/>
            <person name="Rivero F."/>
            <person name="Bankier A.T."/>
            <person name="Lehmann R."/>
            <person name="Hamlin N."/>
            <person name="Davies R."/>
            <person name="Gaudet P."/>
            <person name="Fey P."/>
            <person name="Pilcher K."/>
            <person name="Chen G."/>
            <person name="Saunders D."/>
            <person name="Sodergren E.J."/>
            <person name="Davis P."/>
            <person name="Kerhornou A."/>
            <person name="Nie X."/>
            <person name="Hall N."/>
            <person name="Anjard C."/>
            <person name="Hemphill L."/>
            <person name="Bason N."/>
            <person name="Farbrother P."/>
            <person name="Desany B."/>
            <person name="Just E."/>
            <person name="Morio T."/>
            <person name="Rost R."/>
            <person name="Churcher C.M."/>
            <person name="Cooper J."/>
            <person name="Haydock S."/>
            <person name="van Driessche N."/>
            <person name="Cronin A."/>
            <person name="Goodhead I."/>
            <person name="Muzny D.M."/>
            <person name="Mourier T."/>
            <person name="Pain A."/>
            <person name="Lu M."/>
            <person name="Harper D."/>
            <person name="Lindsay R."/>
            <person name="Hauser H."/>
            <person name="James K.D."/>
            <person name="Quiles M."/>
            <person name="Madan Babu M."/>
            <person name="Saito T."/>
            <person name="Buchrieser C."/>
            <person name="Wardroper A."/>
            <person name="Felder M."/>
            <person name="Thangavelu M."/>
            <person name="Johnson D."/>
            <person name="Knights A."/>
            <person name="Loulseged H."/>
            <person name="Mungall K.L."/>
            <person name="Oliver K."/>
            <person name="Price C."/>
            <person name="Quail M.A."/>
            <person name="Urushihara H."/>
            <person name="Hernandez J."/>
            <person name="Rabbinowitsch E."/>
            <person name="Steffen D."/>
            <person name="Sanders M."/>
            <person name="Ma J."/>
            <person name="Kohara Y."/>
            <person name="Sharp S."/>
            <person name="Simmonds M.N."/>
            <person name="Spiegler S."/>
            <person name="Tivey A."/>
            <person name="Sugano S."/>
            <person name="White B."/>
            <person name="Walker D."/>
            <person name="Woodward J.R."/>
            <person name="Winckler T."/>
            <person name="Tanaka Y."/>
            <person name="Shaulsky G."/>
            <person name="Schleicher M."/>
            <person name="Weinstock G.M."/>
            <person name="Rosenthal A."/>
            <person name="Cox E.C."/>
            <person name="Chisholm R.L."/>
            <person name="Gibbs R.A."/>
            <person name="Loomis W.F."/>
            <person name="Platzer M."/>
            <person name="Kay R.R."/>
            <person name="Williams J.G."/>
            <person name="Dear P.H."/>
            <person name="Noegel A.A."/>
            <person name="Barrell B.G."/>
            <person name="Kuspa A."/>
        </authorList>
    </citation>
    <scope>NUCLEOTIDE SEQUENCE [LARGE SCALE GENOMIC DNA]</scope>
    <source>
        <strain>AX4</strain>
    </source>
</reference>
<gene>
    <name type="ORF">DDB_G0293028</name>
</gene>
<keyword id="KW-0175">Coiled coil</keyword>
<keyword id="KW-0472">Membrane</keyword>
<keyword id="KW-1185">Reference proteome</keyword>
<keyword id="KW-0812">Transmembrane</keyword>
<keyword id="KW-1133">Transmembrane helix</keyword>
<accession>Q54CE6</accession>
<evidence type="ECO:0000255" key="1"/>
<evidence type="ECO:0000256" key="2">
    <source>
        <dbReference type="SAM" id="MobiDB-lite"/>
    </source>
</evidence>
<evidence type="ECO:0000305" key="3"/>
<organism>
    <name type="scientific">Dictyostelium discoideum</name>
    <name type="common">Social amoeba</name>
    <dbReference type="NCBI Taxonomy" id="44689"/>
    <lineage>
        <taxon>Eukaryota</taxon>
        <taxon>Amoebozoa</taxon>
        <taxon>Evosea</taxon>
        <taxon>Eumycetozoa</taxon>
        <taxon>Dictyostelia</taxon>
        <taxon>Dictyosteliales</taxon>
        <taxon>Dictyosteliaceae</taxon>
        <taxon>Dictyostelium</taxon>
    </lineage>
</organism>
<feature type="chain" id="PRO_0000344389" description="Putative uncharacterized transmembrane protein DDB_G0293028">
    <location>
        <begin position="1"/>
        <end position="170"/>
    </location>
</feature>
<feature type="transmembrane region" description="Helical" evidence="1">
    <location>
        <begin position="98"/>
        <end position="118"/>
    </location>
</feature>
<feature type="region of interest" description="Disordered" evidence="2">
    <location>
        <begin position="20"/>
        <end position="95"/>
    </location>
</feature>
<feature type="coiled-coil region" evidence="1">
    <location>
        <begin position="15"/>
        <end position="81"/>
    </location>
</feature>
<feature type="compositionally biased region" description="Basic and acidic residues" evidence="2">
    <location>
        <begin position="20"/>
        <end position="77"/>
    </location>
</feature>
<feature type="compositionally biased region" description="Polar residues" evidence="2">
    <location>
        <begin position="78"/>
        <end position="92"/>
    </location>
</feature>
<name>Y1725_DICDI</name>
<protein>
    <recommendedName>
        <fullName>Putative uncharacterized transmembrane protein DDB_G0293028</fullName>
    </recommendedName>
</protein>